<reference key="1">
    <citation type="submission" date="2007-06" db="EMBL/GenBank/DDBJ databases">
        <title>Complete sequence of chromosome of Staphylococcus aureus subsp. aureus JH1.</title>
        <authorList>
            <consortium name="US DOE Joint Genome Institute"/>
            <person name="Copeland A."/>
            <person name="Lucas S."/>
            <person name="Lapidus A."/>
            <person name="Barry K."/>
            <person name="Detter J.C."/>
            <person name="Glavina del Rio T."/>
            <person name="Hammon N."/>
            <person name="Israni S."/>
            <person name="Dalin E."/>
            <person name="Tice H."/>
            <person name="Pitluck S."/>
            <person name="Chain P."/>
            <person name="Malfatti S."/>
            <person name="Shin M."/>
            <person name="Vergez L."/>
            <person name="Schmutz J."/>
            <person name="Larimer F."/>
            <person name="Land M."/>
            <person name="Hauser L."/>
            <person name="Kyrpides N."/>
            <person name="Ivanova N."/>
            <person name="Tomasz A."/>
            <person name="Richardson P."/>
        </authorList>
    </citation>
    <scope>NUCLEOTIDE SEQUENCE [LARGE SCALE GENOMIC DNA]</scope>
    <source>
        <strain>JH1</strain>
    </source>
</reference>
<dbReference type="EC" id="4.1.1.48" evidence="1"/>
<dbReference type="EMBL" id="CP000736">
    <property type="protein sequence ID" value="ABR52310.1"/>
    <property type="molecule type" value="Genomic_DNA"/>
</dbReference>
<dbReference type="SMR" id="A6U1J2"/>
<dbReference type="KEGG" id="sah:SaurJH1_1460"/>
<dbReference type="HOGENOM" id="CLU_034247_2_1_9"/>
<dbReference type="UniPathway" id="UPA00035">
    <property type="reaction ID" value="UER00043"/>
</dbReference>
<dbReference type="GO" id="GO:0004425">
    <property type="term" value="F:indole-3-glycerol-phosphate synthase activity"/>
    <property type="evidence" value="ECO:0007669"/>
    <property type="project" value="UniProtKB-UniRule"/>
</dbReference>
<dbReference type="GO" id="GO:0004640">
    <property type="term" value="F:phosphoribosylanthranilate isomerase activity"/>
    <property type="evidence" value="ECO:0007669"/>
    <property type="project" value="TreeGrafter"/>
</dbReference>
<dbReference type="GO" id="GO:0000162">
    <property type="term" value="P:L-tryptophan biosynthetic process"/>
    <property type="evidence" value="ECO:0007669"/>
    <property type="project" value="UniProtKB-UniRule"/>
</dbReference>
<dbReference type="CDD" id="cd00331">
    <property type="entry name" value="IGPS"/>
    <property type="match status" value="1"/>
</dbReference>
<dbReference type="FunFam" id="3.20.20.70:FF:000212">
    <property type="entry name" value="Indole-3-glycerol phosphate synthase"/>
    <property type="match status" value="1"/>
</dbReference>
<dbReference type="Gene3D" id="3.20.20.70">
    <property type="entry name" value="Aldolase class I"/>
    <property type="match status" value="1"/>
</dbReference>
<dbReference type="HAMAP" id="MF_00134_B">
    <property type="entry name" value="IGPS_B"/>
    <property type="match status" value="1"/>
</dbReference>
<dbReference type="InterPro" id="IPR013785">
    <property type="entry name" value="Aldolase_TIM"/>
</dbReference>
<dbReference type="InterPro" id="IPR045186">
    <property type="entry name" value="Indole-3-glycerol_P_synth"/>
</dbReference>
<dbReference type="InterPro" id="IPR013798">
    <property type="entry name" value="Indole-3-glycerol_P_synth_dom"/>
</dbReference>
<dbReference type="InterPro" id="IPR001468">
    <property type="entry name" value="Indole-3-GlycerolPSynthase_CS"/>
</dbReference>
<dbReference type="InterPro" id="IPR011060">
    <property type="entry name" value="RibuloseP-bd_barrel"/>
</dbReference>
<dbReference type="NCBIfam" id="NF001371">
    <property type="entry name" value="PRK00278.1-3"/>
    <property type="match status" value="1"/>
</dbReference>
<dbReference type="PANTHER" id="PTHR22854:SF2">
    <property type="entry name" value="INDOLE-3-GLYCEROL-PHOSPHATE SYNTHASE"/>
    <property type="match status" value="1"/>
</dbReference>
<dbReference type="PANTHER" id="PTHR22854">
    <property type="entry name" value="TRYPTOPHAN BIOSYNTHESIS PROTEIN"/>
    <property type="match status" value="1"/>
</dbReference>
<dbReference type="Pfam" id="PF00218">
    <property type="entry name" value="IGPS"/>
    <property type="match status" value="1"/>
</dbReference>
<dbReference type="SUPFAM" id="SSF51366">
    <property type="entry name" value="Ribulose-phoshate binding barrel"/>
    <property type="match status" value="1"/>
</dbReference>
<dbReference type="PROSITE" id="PS00614">
    <property type="entry name" value="IGPS"/>
    <property type="match status" value="1"/>
</dbReference>
<sequence>MTILAEIVKYKQSLLQNGYYQDKLNTLKSVKIQNKKSFINAIEKEPKLAIIAEIKSKSPTVNDLPERDLSQQISDYEKYGANAVSILTDEKYFGGSFERLQALTTKTTLPVLCKDFIIDPLQIDVAKQAGASMILLIVNILSDKQLKDLYNYAISQNLEVLIEVHDRHELERAYKVNAKLIGVNNRDLKRFVTNVEHTNTILENKKPNHHYISESGIHDASDVRKILHSGIDGLLIGEALMRCDNLSEFLPQLKMQKVKS</sequence>
<proteinExistence type="inferred from homology"/>
<organism>
    <name type="scientific">Staphylococcus aureus (strain JH1)</name>
    <dbReference type="NCBI Taxonomy" id="359787"/>
    <lineage>
        <taxon>Bacteria</taxon>
        <taxon>Bacillati</taxon>
        <taxon>Bacillota</taxon>
        <taxon>Bacilli</taxon>
        <taxon>Bacillales</taxon>
        <taxon>Staphylococcaceae</taxon>
        <taxon>Staphylococcus</taxon>
    </lineage>
</organism>
<feature type="chain" id="PRO_1000095887" description="Indole-3-glycerol phosphate synthase">
    <location>
        <begin position="1"/>
        <end position="260"/>
    </location>
</feature>
<gene>
    <name evidence="1" type="primary">trpC</name>
    <name type="ordered locus">SaurJH1_1460</name>
</gene>
<keyword id="KW-0028">Amino-acid biosynthesis</keyword>
<keyword id="KW-0057">Aromatic amino acid biosynthesis</keyword>
<keyword id="KW-0210">Decarboxylase</keyword>
<keyword id="KW-0456">Lyase</keyword>
<keyword id="KW-0822">Tryptophan biosynthesis</keyword>
<protein>
    <recommendedName>
        <fullName evidence="1">Indole-3-glycerol phosphate synthase</fullName>
        <shortName evidence="1">IGPS</shortName>
        <ecNumber evidence="1">4.1.1.48</ecNumber>
    </recommendedName>
</protein>
<accession>A6U1J2</accession>
<evidence type="ECO:0000255" key="1">
    <source>
        <dbReference type="HAMAP-Rule" id="MF_00134"/>
    </source>
</evidence>
<comment type="catalytic activity">
    <reaction evidence="1">
        <text>1-(2-carboxyphenylamino)-1-deoxy-D-ribulose 5-phosphate + H(+) = (1S,2R)-1-C-(indol-3-yl)glycerol 3-phosphate + CO2 + H2O</text>
        <dbReference type="Rhea" id="RHEA:23476"/>
        <dbReference type="ChEBI" id="CHEBI:15377"/>
        <dbReference type="ChEBI" id="CHEBI:15378"/>
        <dbReference type="ChEBI" id="CHEBI:16526"/>
        <dbReference type="ChEBI" id="CHEBI:58613"/>
        <dbReference type="ChEBI" id="CHEBI:58866"/>
        <dbReference type="EC" id="4.1.1.48"/>
    </reaction>
</comment>
<comment type="pathway">
    <text evidence="1">Amino-acid biosynthesis; L-tryptophan biosynthesis; L-tryptophan from chorismate: step 4/5.</text>
</comment>
<comment type="similarity">
    <text evidence="1">Belongs to the TrpC family.</text>
</comment>
<name>TRPC_STAA2</name>